<keyword id="KW-0143">Chaperone</keyword>
<keyword id="KW-0963">Cytoplasm</keyword>
<evidence type="ECO:0000255" key="1">
    <source>
        <dbReference type="HAMAP-Rule" id="MF_00580"/>
    </source>
</evidence>
<name>CH10_METRJ</name>
<reference key="1">
    <citation type="submission" date="2008-03" db="EMBL/GenBank/DDBJ databases">
        <title>Complete sequence of chromosome of Methylobacterium radiotolerans JCM 2831.</title>
        <authorList>
            <consortium name="US DOE Joint Genome Institute"/>
            <person name="Copeland A."/>
            <person name="Lucas S."/>
            <person name="Lapidus A."/>
            <person name="Glavina del Rio T."/>
            <person name="Dalin E."/>
            <person name="Tice H."/>
            <person name="Bruce D."/>
            <person name="Goodwin L."/>
            <person name="Pitluck S."/>
            <person name="Kiss H."/>
            <person name="Brettin T."/>
            <person name="Detter J.C."/>
            <person name="Han C."/>
            <person name="Kuske C.R."/>
            <person name="Schmutz J."/>
            <person name="Larimer F."/>
            <person name="Land M."/>
            <person name="Hauser L."/>
            <person name="Kyrpides N."/>
            <person name="Mikhailova N."/>
            <person name="Marx C.J."/>
            <person name="Richardson P."/>
        </authorList>
    </citation>
    <scope>NUCLEOTIDE SEQUENCE [LARGE SCALE GENOMIC DNA]</scope>
    <source>
        <strain>ATCC 27329 / DSM 1819 / JCM 2831 / NBRC 15690 / NCIMB 10815 / 0-1</strain>
    </source>
</reference>
<comment type="function">
    <text evidence="1">Together with the chaperonin GroEL, plays an essential role in assisting protein folding. The GroEL-GroES system forms a nano-cage that allows encapsulation of the non-native substrate proteins and provides a physical environment optimized to promote and accelerate protein folding. GroES binds to the apical surface of the GroEL ring, thereby capping the opening of the GroEL channel.</text>
</comment>
<comment type="subunit">
    <text evidence="1">Heptamer of 7 subunits arranged in a ring. Interacts with the chaperonin GroEL.</text>
</comment>
<comment type="subcellular location">
    <subcellularLocation>
        <location evidence="1">Cytoplasm</location>
    </subcellularLocation>
</comment>
<comment type="similarity">
    <text evidence="1">Belongs to the GroES chaperonin family.</text>
</comment>
<accession>B1LVA1</accession>
<sequence>MKFRPLHDRVVVRRIESEEKTKGGIIIPDTAKEKPQEGEVVAVGPGARDEQGRVNALDVKAGDRVLFGKWSGTEVKIDGQDLLIMKESDIMGVVAL</sequence>
<gene>
    <name evidence="1" type="primary">groES</name>
    <name evidence="1" type="synonym">groS</name>
    <name type="ordered locus">Mrad2831_0535</name>
</gene>
<proteinExistence type="inferred from homology"/>
<protein>
    <recommendedName>
        <fullName evidence="1">Co-chaperonin GroES</fullName>
    </recommendedName>
    <alternativeName>
        <fullName evidence="1">10 kDa chaperonin</fullName>
    </alternativeName>
    <alternativeName>
        <fullName evidence="1">Chaperonin-10</fullName>
        <shortName evidence="1">Cpn10</shortName>
    </alternativeName>
</protein>
<feature type="chain" id="PRO_1000129682" description="Co-chaperonin GroES">
    <location>
        <begin position="1"/>
        <end position="96"/>
    </location>
</feature>
<organism>
    <name type="scientific">Methylobacterium radiotolerans (strain ATCC 27329 / DSM 1819 / JCM 2831 / NBRC 15690 / NCIMB 10815 / 0-1)</name>
    <dbReference type="NCBI Taxonomy" id="426355"/>
    <lineage>
        <taxon>Bacteria</taxon>
        <taxon>Pseudomonadati</taxon>
        <taxon>Pseudomonadota</taxon>
        <taxon>Alphaproteobacteria</taxon>
        <taxon>Hyphomicrobiales</taxon>
        <taxon>Methylobacteriaceae</taxon>
        <taxon>Methylobacterium</taxon>
    </lineage>
</organism>
<dbReference type="EMBL" id="CP001001">
    <property type="protein sequence ID" value="ACB22546.1"/>
    <property type="molecule type" value="Genomic_DNA"/>
</dbReference>
<dbReference type="RefSeq" id="WP_012317542.1">
    <property type="nucleotide sequence ID" value="NC_010505.1"/>
</dbReference>
<dbReference type="SMR" id="B1LVA1"/>
<dbReference type="STRING" id="426355.Mrad2831_0535"/>
<dbReference type="GeneID" id="6136548"/>
<dbReference type="KEGG" id="mrd:Mrad2831_0535"/>
<dbReference type="eggNOG" id="COG0234">
    <property type="taxonomic scope" value="Bacteria"/>
</dbReference>
<dbReference type="HOGENOM" id="CLU_132825_1_0_5"/>
<dbReference type="OrthoDB" id="9806791at2"/>
<dbReference type="Proteomes" id="UP000006589">
    <property type="component" value="Chromosome"/>
</dbReference>
<dbReference type="GO" id="GO:0005737">
    <property type="term" value="C:cytoplasm"/>
    <property type="evidence" value="ECO:0007669"/>
    <property type="project" value="UniProtKB-SubCell"/>
</dbReference>
<dbReference type="GO" id="GO:0005524">
    <property type="term" value="F:ATP binding"/>
    <property type="evidence" value="ECO:0007669"/>
    <property type="project" value="InterPro"/>
</dbReference>
<dbReference type="GO" id="GO:0046872">
    <property type="term" value="F:metal ion binding"/>
    <property type="evidence" value="ECO:0007669"/>
    <property type="project" value="TreeGrafter"/>
</dbReference>
<dbReference type="GO" id="GO:0044183">
    <property type="term" value="F:protein folding chaperone"/>
    <property type="evidence" value="ECO:0007669"/>
    <property type="project" value="InterPro"/>
</dbReference>
<dbReference type="GO" id="GO:0051087">
    <property type="term" value="F:protein-folding chaperone binding"/>
    <property type="evidence" value="ECO:0007669"/>
    <property type="project" value="TreeGrafter"/>
</dbReference>
<dbReference type="GO" id="GO:0051082">
    <property type="term" value="F:unfolded protein binding"/>
    <property type="evidence" value="ECO:0007669"/>
    <property type="project" value="TreeGrafter"/>
</dbReference>
<dbReference type="GO" id="GO:0051085">
    <property type="term" value="P:chaperone cofactor-dependent protein refolding"/>
    <property type="evidence" value="ECO:0007669"/>
    <property type="project" value="TreeGrafter"/>
</dbReference>
<dbReference type="CDD" id="cd00320">
    <property type="entry name" value="cpn10"/>
    <property type="match status" value="1"/>
</dbReference>
<dbReference type="FunFam" id="2.30.33.40:FF:000001">
    <property type="entry name" value="10 kDa chaperonin"/>
    <property type="match status" value="1"/>
</dbReference>
<dbReference type="Gene3D" id="2.30.33.40">
    <property type="entry name" value="GroES chaperonin"/>
    <property type="match status" value="1"/>
</dbReference>
<dbReference type="HAMAP" id="MF_00580">
    <property type="entry name" value="CH10"/>
    <property type="match status" value="1"/>
</dbReference>
<dbReference type="InterPro" id="IPR020818">
    <property type="entry name" value="Chaperonin_GroES"/>
</dbReference>
<dbReference type="InterPro" id="IPR037124">
    <property type="entry name" value="Chaperonin_GroES_sf"/>
</dbReference>
<dbReference type="InterPro" id="IPR018369">
    <property type="entry name" value="Chaprnonin_Cpn10_CS"/>
</dbReference>
<dbReference type="InterPro" id="IPR011032">
    <property type="entry name" value="GroES-like_sf"/>
</dbReference>
<dbReference type="NCBIfam" id="NF001527">
    <property type="entry name" value="PRK00364.1-2"/>
    <property type="match status" value="1"/>
</dbReference>
<dbReference type="NCBIfam" id="NF001529">
    <property type="entry name" value="PRK00364.1-5"/>
    <property type="match status" value="1"/>
</dbReference>
<dbReference type="NCBIfam" id="NF001531">
    <property type="entry name" value="PRK00364.2-2"/>
    <property type="match status" value="1"/>
</dbReference>
<dbReference type="NCBIfam" id="NF001533">
    <property type="entry name" value="PRK00364.2-4"/>
    <property type="match status" value="1"/>
</dbReference>
<dbReference type="NCBIfam" id="NF001534">
    <property type="entry name" value="PRK00364.2-5"/>
    <property type="match status" value="1"/>
</dbReference>
<dbReference type="PANTHER" id="PTHR10772">
    <property type="entry name" value="10 KDA HEAT SHOCK PROTEIN"/>
    <property type="match status" value="1"/>
</dbReference>
<dbReference type="PANTHER" id="PTHR10772:SF58">
    <property type="entry name" value="CO-CHAPERONIN GROES"/>
    <property type="match status" value="1"/>
</dbReference>
<dbReference type="Pfam" id="PF00166">
    <property type="entry name" value="Cpn10"/>
    <property type="match status" value="1"/>
</dbReference>
<dbReference type="PRINTS" id="PR00297">
    <property type="entry name" value="CHAPERONIN10"/>
</dbReference>
<dbReference type="SMART" id="SM00883">
    <property type="entry name" value="Cpn10"/>
    <property type="match status" value="1"/>
</dbReference>
<dbReference type="SUPFAM" id="SSF50129">
    <property type="entry name" value="GroES-like"/>
    <property type="match status" value="1"/>
</dbReference>
<dbReference type="PROSITE" id="PS00681">
    <property type="entry name" value="CHAPERONINS_CPN10"/>
    <property type="match status" value="1"/>
</dbReference>